<reference key="1">
    <citation type="journal article" date="2013" name="Toxins">
        <title>A proteomics and transcriptomics investigation of the venom from the barychelid spider Trittame loki (brush-foot trapdoor).</title>
        <authorList>
            <person name="Undheim E.A."/>
            <person name="Sunagar K."/>
            <person name="Herzig V."/>
            <person name="Kely L."/>
            <person name="Low D.H."/>
            <person name="Jackson T.N."/>
            <person name="Jones A."/>
            <person name="Kurniawan N."/>
            <person name="King G.F."/>
            <person name="Ali S.A."/>
            <person name="Antunes A."/>
            <person name="Ruder T."/>
            <person name="Fry B.G."/>
        </authorList>
    </citation>
    <scope>NUCLEOTIDE SEQUENCE [MRNA]</scope>
    <scope>IDENTIFICATION BY MASS SPECTROMETRY</scope>
    <source>
        <tissue>Venom</tissue>
        <tissue>Venom gland</tissue>
    </source>
</reference>
<evidence type="ECO:0000250" key="1"/>
<evidence type="ECO:0000255" key="2"/>
<evidence type="ECO:0000255" key="3">
    <source>
        <dbReference type="PROSITE-ProRule" id="PRU01233"/>
    </source>
</evidence>
<evidence type="ECO:0000255" key="4">
    <source>
        <dbReference type="PROSITE-ProRule" id="PRU10095"/>
    </source>
</evidence>
<evidence type="ECO:0000305" key="5"/>
<protein>
    <recommendedName>
        <fullName>Neprilysin-1</fullName>
        <ecNumber>3.4.24.-</ecNumber>
    </recommendedName>
</protein>
<sequence>MAVALLVALCVVSSRMALPSEAVPFYRQDSEVCNSPVCQKAAQTLLESMDTSVDPCQDFYQYACGEWIRKHPIPEEKFRISPLDALYDNVLDTVAEILKNATSENHATSVLKSANYFQACMDAEARETQGVEPLKNLLTSLGGWPMATPGWSGANYHWQTQVATVTRNLGIRPIIDVFVDADANRTSQHIINLDQADFGLGRNQLINLTSSSRTQEIVAGYRNYIIASAKLLNPNADDIQLANDADEIIQFESTLAQFSTPPEERRDASSWYHKMTVAEVQTVTENTYFQWTEFLNTVLKEFPQVMPETEVILYERDYTKNVLKLAHETNPRILANYIGWIVLMKEGYHTTRQFRENKFQFEKVQIGIEKEEKLERVCTDHTIGLLGYAVGRLYVDKFFTEEEKQDIDELVENIRSAYKSTLRNNTWMDHVTRNKAIDKLEAMINKMAYPTWIKNDNELNEYYRSVPAINRDEFFSSLLKVTKVVKAIQLGKWNKPTDRIKDWITTPAVVNAFYSPDSNSMSFPAGILNWPLYQYGTSPALNYGAIGAIIGHEMSHGFDDQGGQTDPEGNLVDWWLEETKAKFNQKADCFRKQYSSYLEPTTNMHLNGNNTVGENIADNGAVRNAFIAYKMHLLHSQNNHVMRKKTLPGLSATAEQLFFLGYSTMWCGAERKESLEWSIQYDSHTPSEFRAVVPLTNSRSFAEAFGCASGTPMNPTHKCLLW</sequence>
<name>NEP_TRILK</name>
<feature type="signal peptide" evidence="2">
    <location>
        <begin position="1"/>
        <end position="17"/>
    </location>
</feature>
<feature type="chain" id="PRO_0000429203" description="Neprilysin-1">
    <location>
        <begin position="18"/>
        <end position="722"/>
    </location>
</feature>
<feature type="domain" description="Peptidase M13" evidence="3">
    <location>
        <begin position="32"/>
        <end position="722"/>
    </location>
</feature>
<feature type="active site" evidence="3 4">
    <location>
        <position position="553"/>
    </location>
</feature>
<feature type="active site" description="Proton donor" evidence="3">
    <location>
        <position position="618"/>
    </location>
</feature>
<feature type="binding site" evidence="3 4">
    <location>
        <position position="552"/>
    </location>
    <ligand>
        <name>Zn(2+)</name>
        <dbReference type="ChEBI" id="CHEBI:29105"/>
        <note>catalytic</note>
    </ligand>
</feature>
<feature type="binding site" evidence="3 4">
    <location>
        <position position="556"/>
    </location>
    <ligand>
        <name>Zn(2+)</name>
        <dbReference type="ChEBI" id="CHEBI:29105"/>
        <note>catalytic</note>
    </ligand>
</feature>
<feature type="binding site" evidence="3">
    <location>
        <position position="614"/>
    </location>
    <ligand>
        <name>Zn(2+)</name>
        <dbReference type="ChEBI" id="CHEBI:29105"/>
        <note>catalytic</note>
    </ligand>
</feature>
<feature type="glycosylation site" description="N-linked (GlcNAc...) asparagine" evidence="1">
    <location>
        <position position="100"/>
    </location>
</feature>
<feature type="glycosylation site" description="N-linked (GlcNAc...) asparagine" evidence="2">
    <location>
        <position position="184"/>
    </location>
</feature>
<feature type="glycosylation site" description="N-linked (GlcNAc...) asparagine" evidence="2">
    <location>
        <position position="207"/>
    </location>
</feature>
<feature type="glycosylation site" description="N-linked (GlcNAc...) asparagine" evidence="2">
    <location>
        <position position="424"/>
    </location>
</feature>
<feature type="glycosylation site" description="N-linked (GlcNAc...) asparagine" evidence="2">
    <location>
        <position position="609"/>
    </location>
</feature>
<feature type="disulfide bond" evidence="3">
    <location>
        <begin position="33"/>
        <end position="38"/>
    </location>
</feature>
<feature type="disulfide bond" evidence="3">
    <location>
        <begin position="56"/>
        <end position="707"/>
    </location>
</feature>
<feature type="disulfide bond" evidence="3">
    <location>
        <begin position="64"/>
        <end position="667"/>
    </location>
</feature>
<feature type="disulfide bond" evidence="3">
    <location>
        <begin position="120"/>
        <end position="378"/>
    </location>
</feature>
<feature type="disulfide bond" evidence="3">
    <location>
        <begin position="589"/>
        <end position="719"/>
    </location>
</feature>
<proteinExistence type="evidence at protein level"/>
<comment type="cofactor">
    <cofactor evidence="1">
        <name>Zn(2+)</name>
        <dbReference type="ChEBI" id="CHEBI:29105"/>
    </cofactor>
    <text evidence="1">Binds 1 zinc ion per subunit.</text>
</comment>
<comment type="subcellular location">
    <subcellularLocation>
        <location>Secreted</location>
    </subcellularLocation>
</comment>
<comment type="tissue specificity">
    <text>Expressed by the venom gland.</text>
</comment>
<comment type="PTM">
    <text evidence="5">Contains 5 disulfide bonds.</text>
</comment>
<comment type="similarity">
    <text evidence="3 5">Belongs to the peptidase M13 family.</text>
</comment>
<keyword id="KW-1015">Disulfide bond</keyword>
<keyword id="KW-0325">Glycoprotein</keyword>
<keyword id="KW-0378">Hydrolase</keyword>
<keyword id="KW-0479">Metal-binding</keyword>
<keyword id="KW-0482">Metalloprotease</keyword>
<keyword id="KW-0645">Protease</keyword>
<keyword id="KW-0964">Secreted</keyword>
<keyword id="KW-0732">Signal</keyword>
<keyword id="KW-0862">Zinc</keyword>
<accession>W4VS99</accession>
<dbReference type="EC" id="3.4.24.-"/>
<dbReference type="EMBL" id="GAQE01000047">
    <property type="protein sequence ID" value="JAB84507.1"/>
    <property type="molecule type" value="Transcribed_RNA"/>
</dbReference>
<dbReference type="SMR" id="W4VS99"/>
<dbReference type="ArachnoServer" id="AS001535">
    <property type="toxin name" value="Neprilysin-1-Trittame loki"/>
</dbReference>
<dbReference type="GO" id="GO:0005576">
    <property type="term" value="C:extracellular region"/>
    <property type="evidence" value="ECO:0007669"/>
    <property type="project" value="UniProtKB-SubCell"/>
</dbReference>
<dbReference type="GO" id="GO:0005886">
    <property type="term" value="C:plasma membrane"/>
    <property type="evidence" value="ECO:0007669"/>
    <property type="project" value="TreeGrafter"/>
</dbReference>
<dbReference type="GO" id="GO:0046872">
    <property type="term" value="F:metal ion binding"/>
    <property type="evidence" value="ECO:0007669"/>
    <property type="project" value="UniProtKB-KW"/>
</dbReference>
<dbReference type="GO" id="GO:0004222">
    <property type="term" value="F:metalloendopeptidase activity"/>
    <property type="evidence" value="ECO:0007669"/>
    <property type="project" value="InterPro"/>
</dbReference>
<dbReference type="GO" id="GO:0016485">
    <property type="term" value="P:protein processing"/>
    <property type="evidence" value="ECO:0007669"/>
    <property type="project" value="TreeGrafter"/>
</dbReference>
<dbReference type="CDD" id="cd08662">
    <property type="entry name" value="M13"/>
    <property type="match status" value="1"/>
</dbReference>
<dbReference type="FunFam" id="3.40.390.10:FF:000076">
    <property type="entry name" value="membrane metallo-endopeptidase-like 1"/>
    <property type="match status" value="1"/>
</dbReference>
<dbReference type="Gene3D" id="3.40.390.10">
    <property type="entry name" value="Collagenase (Catalytic Domain)"/>
    <property type="match status" value="1"/>
</dbReference>
<dbReference type="Gene3D" id="1.10.1380.10">
    <property type="entry name" value="Neutral endopeptidase , domain2"/>
    <property type="match status" value="1"/>
</dbReference>
<dbReference type="InterPro" id="IPR024079">
    <property type="entry name" value="MetalloPept_cat_dom_sf"/>
</dbReference>
<dbReference type="InterPro" id="IPR000718">
    <property type="entry name" value="Peptidase_M13"/>
</dbReference>
<dbReference type="InterPro" id="IPR018497">
    <property type="entry name" value="Peptidase_M13_C"/>
</dbReference>
<dbReference type="InterPro" id="IPR042089">
    <property type="entry name" value="Peptidase_M13_dom_2"/>
</dbReference>
<dbReference type="InterPro" id="IPR008753">
    <property type="entry name" value="Peptidase_M13_N"/>
</dbReference>
<dbReference type="PANTHER" id="PTHR11733:SF237">
    <property type="entry name" value="NEPRILYSIN-LIKE 4"/>
    <property type="match status" value="1"/>
</dbReference>
<dbReference type="PANTHER" id="PTHR11733">
    <property type="entry name" value="ZINC METALLOPROTEASE FAMILY M13 NEPRILYSIN-RELATED"/>
    <property type="match status" value="1"/>
</dbReference>
<dbReference type="Pfam" id="PF01431">
    <property type="entry name" value="Peptidase_M13"/>
    <property type="match status" value="1"/>
</dbReference>
<dbReference type="Pfam" id="PF05649">
    <property type="entry name" value="Peptidase_M13_N"/>
    <property type="match status" value="1"/>
</dbReference>
<dbReference type="PRINTS" id="PR00786">
    <property type="entry name" value="NEPRILYSIN"/>
</dbReference>
<dbReference type="SUPFAM" id="SSF55486">
    <property type="entry name" value="Metalloproteases ('zincins'), catalytic domain"/>
    <property type="match status" value="1"/>
</dbReference>
<dbReference type="PROSITE" id="PS51885">
    <property type="entry name" value="NEPRILYSIN"/>
    <property type="match status" value="1"/>
</dbReference>
<dbReference type="PROSITE" id="PS00142">
    <property type="entry name" value="ZINC_PROTEASE"/>
    <property type="match status" value="1"/>
</dbReference>
<organism>
    <name type="scientific">Trittame loki</name>
    <name type="common">Brush-footed trapdoor spider</name>
    <dbReference type="NCBI Taxonomy" id="1295018"/>
    <lineage>
        <taxon>Eukaryota</taxon>
        <taxon>Metazoa</taxon>
        <taxon>Ecdysozoa</taxon>
        <taxon>Arthropoda</taxon>
        <taxon>Chelicerata</taxon>
        <taxon>Arachnida</taxon>
        <taxon>Araneae</taxon>
        <taxon>Mygalomorphae</taxon>
        <taxon>Barychelidae</taxon>
        <taxon>Trittame</taxon>
    </lineage>
</organism>